<proteinExistence type="inferred from homology"/>
<accession>Q6L152</accession>
<protein>
    <recommendedName>
        <fullName evidence="1">Large ribosomal subunit protein uL16</fullName>
    </recommendedName>
    <alternativeName>
        <fullName evidence="2">50S ribosomal protein L10e</fullName>
    </alternativeName>
</protein>
<dbReference type="EMBL" id="AE017261">
    <property type="protein sequence ID" value="AAT43300.1"/>
    <property type="molecule type" value="Genomic_DNA"/>
</dbReference>
<dbReference type="RefSeq" id="WP_011177516.1">
    <property type="nucleotide sequence ID" value="NC_005877.1"/>
</dbReference>
<dbReference type="SMR" id="Q6L152"/>
<dbReference type="FunCoup" id="Q6L152">
    <property type="interactions" value="157"/>
</dbReference>
<dbReference type="STRING" id="263820.PTO0715"/>
<dbReference type="PaxDb" id="263820-PTO0715"/>
<dbReference type="GeneID" id="2845294"/>
<dbReference type="KEGG" id="pto:PTO0715"/>
<dbReference type="PATRIC" id="fig|263820.9.peg.750"/>
<dbReference type="eggNOG" id="arCOG04113">
    <property type="taxonomic scope" value="Archaea"/>
</dbReference>
<dbReference type="HOGENOM" id="CLU_084051_0_2_2"/>
<dbReference type="InParanoid" id="Q6L152"/>
<dbReference type="OrthoDB" id="30538at2157"/>
<dbReference type="Proteomes" id="UP000000438">
    <property type="component" value="Chromosome"/>
</dbReference>
<dbReference type="GO" id="GO:1990904">
    <property type="term" value="C:ribonucleoprotein complex"/>
    <property type="evidence" value="ECO:0007669"/>
    <property type="project" value="UniProtKB-KW"/>
</dbReference>
<dbReference type="GO" id="GO:0005840">
    <property type="term" value="C:ribosome"/>
    <property type="evidence" value="ECO:0007669"/>
    <property type="project" value="UniProtKB-KW"/>
</dbReference>
<dbReference type="GO" id="GO:0003735">
    <property type="term" value="F:structural constituent of ribosome"/>
    <property type="evidence" value="ECO:0007669"/>
    <property type="project" value="InterPro"/>
</dbReference>
<dbReference type="GO" id="GO:0006412">
    <property type="term" value="P:translation"/>
    <property type="evidence" value="ECO:0007669"/>
    <property type="project" value="UniProtKB-UniRule"/>
</dbReference>
<dbReference type="CDD" id="cd01433">
    <property type="entry name" value="Ribosomal_L16_L10e"/>
    <property type="match status" value="1"/>
</dbReference>
<dbReference type="Gene3D" id="3.90.1170.10">
    <property type="entry name" value="Ribosomal protein L10e/L16"/>
    <property type="match status" value="1"/>
</dbReference>
<dbReference type="HAMAP" id="MF_00448">
    <property type="entry name" value="Ribosomal_uL16_arch"/>
    <property type="match status" value="1"/>
</dbReference>
<dbReference type="InterPro" id="IPR047873">
    <property type="entry name" value="Ribosomal_uL16"/>
</dbReference>
<dbReference type="InterPro" id="IPR022981">
    <property type="entry name" value="Ribosomal_uL16_arc"/>
</dbReference>
<dbReference type="InterPro" id="IPR018255">
    <property type="entry name" value="Ribosomal_uL16_CS_euk_arc"/>
</dbReference>
<dbReference type="InterPro" id="IPR016180">
    <property type="entry name" value="Ribosomal_uL16_dom"/>
</dbReference>
<dbReference type="InterPro" id="IPR001197">
    <property type="entry name" value="Ribosomal_uL16_euk_arch"/>
</dbReference>
<dbReference type="InterPro" id="IPR036920">
    <property type="entry name" value="Ribosomal_uL16_sf"/>
</dbReference>
<dbReference type="NCBIfam" id="NF003239">
    <property type="entry name" value="PRK04199.1-4"/>
    <property type="match status" value="1"/>
</dbReference>
<dbReference type="PANTHER" id="PTHR11726">
    <property type="entry name" value="60S RIBOSOMAL PROTEIN L10"/>
    <property type="match status" value="1"/>
</dbReference>
<dbReference type="Pfam" id="PF00252">
    <property type="entry name" value="Ribosomal_L16"/>
    <property type="match status" value="1"/>
</dbReference>
<dbReference type="PIRSF" id="PIRSF005590">
    <property type="entry name" value="Ribosomal_L10"/>
    <property type="match status" value="1"/>
</dbReference>
<dbReference type="SUPFAM" id="SSF54686">
    <property type="entry name" value="Ribosomal protein L16p/L10e"/>
    <property type="match status" value="1"/>
</dbReference>
<dbReference type="PROSITE" id="PS01257">
    <property type="entry name" value="RIBOSOMAL_L10E"/>
    <property type="match status" value="1"/>
</dbReference>
<organism>
    <name type="scientific">Picrophilus torridus (strain ATCC 700027 / DSM 9790 / JCM 10055 / NBRC 100828 / KAW 2/3)</name>
    <dbReference type="NCBI Taxonomy" id="1122961"/>
    <lineage>
        <taxon>Archaea</taxon>
        <taxon>Methanobacteriati</taxon>
        <taxon>Thermoplasmatota</taxon>
        <taxon>Thermoplasmata</taxon>
        <taxon>Thermoplasmatales</taxon>
        <taxon>Picrophilaceae</taxon>
        <taxon>Picrophilus</taxon>
    </lineage>
</organism>
<gene>
    <name evidence="1" type="primary">rpl10e</name>
    <name type="ordered locus">PTO0715</name>
</gene>
<evidence type="ECO:0000255" key="1">
    <source>
        <dbReference type="HAMAP-Rule" id="MF_00448"/>
    </source>
</evidence>
<evidence type="ECO:0000305" key="2"/>
<feature type="chain" id="PRO_0000147141" description="Large ribosomal subunit protein uL16">
    <location>
        <begin position="1"/>
        <end position="176"/>
    </location>
</feature>
<sequence>MVTKPARMYTRITGPAYTRKEFMGGVPYPKITTFIQGNQKKDFEIEMMLVAEEACQIRHTALEAARVSVNRKLLDAAGSDNYFLQIRPYPHQVIREHKMATGAGADRISSGMRAAFGRPVGTAARVYPGQIIMVGRVDRNNAKLLKDALHKASIKLPTPCKVVVTKGSKITESLGI</sequence>
<reference key="1">
    <citation type="journal article" date="2004" name="Proc. Natl. Acad. Sci. U.S.A.">
        <title>Genome sequence of Picrophilus torridus and its implications for life around pH 0.</title>
        <authorList>
            <person name="Fuetterer O."/>
            <person name="Angelov A."/>
            <person name="Liesegang H."/>
            <person name="Gottschalk G."/>
            <person name="Schleper C."/>
            <person name="Schepers B."/>
            <person name="Dock C."/>
            <person name="Antranikian G."/>
            <person name="Liebl W."/>
        </authorList>
    </citation>
    <scope>NUCLEOTIDE SEQUENCE [LARGE SCALE GENOMIC DNA]</scope>
    <source>
        <strain>ATCC 700027 / DSM 9790 / JCM 10055 / NBRC 100828 / KAW 2/3</strain>
    </source>
</reference>
<name>RL10E_PICTO</name>
<comment type="similarity">
    <text evidence="1">Belongs to the universal ribosomal protein uL16 family.</text>
</comment>
<keyword id="KW-0687">Ribonucleoprotein</keyword>
<keyword id="KW-0689">Ribosomal protein</keyword>